<dbReference type="EMBL" id="EU090172">
    <property type="protein sequence ID" value="ABW77580.1"/>
    <property type="molecule type" value="mRNA"/>
</dbReference>
<dbReference type="TCDB" id="8.B.4.3.1">
    <property type="family name" value="the conotoxin t (conotoxin t) family"/>
</dbReference>
<dbReference type="ConoServer" id="2815">
    <property type="toxin name" value="Ca5.1 precursor"/>
</dbReference>
<dbReference type="GO" id="GO:0005576">
    <property type="term" value="C:extracellular region"/>
    <property type="evidence" value="ECO:0007669"/>
    <property type="project" value="UniProtKB-SubCell"/>
</dbReference>
<dbReference type="GO" id="GO:0090729">
    <property type="term" value="F:toxin activity"/>
    <property type="evidence" value="ECO:0007669"/>
    <property type="project" value="UniProtKB-KW"/>
</dbReference>
<dbReference type="InterPro" id="IPR031565">
    <property type="entry name" value="T-conotoxin"/>
</dbReference>
<dbReference type="Pfam" id="PF16981">
    <property type="entry name" value="Chi-conotoxin"/>
    <property type="match status" value="1"/>
</dbReference>
<reference key="1">
    <citation type="journal article" date="2007" name="Peptides">
        <title>Identification of six novel T-1 conotoxins from Conus pulicarius by molecular cloning.</title>
        <authorList>
            <person name="Peng C."/>
            <person name="Wu X."/>
            <person name="Han Y."/>
            <person name="Yuan D."/>
            <person name="Chi C."/>
            <person name="Wang C."/>
        </authorList>
    </citation>
    <scope>NUCLEOTIDE SEQUENCE [MRNA]</scope>
    <source>
        <tissue>Venom duct</tissue>
    </source>
</reference>
<reference key="2">
    <citation type="journal article" date="2019" name="Mar. Drugs">
        <title>High-throughput identification and analysis of novel conotoxins from three vermivorous cone snails by transcriptome sequencing.</title>
        <authorList>
            <person name="Yao G."/>
            <person name="Peng C."/>
            <person name="Zhu Y."/>
            <person name="Fan C."/>
            <person name="Jiang H."/>
            <person name="Chen J."/>
            <person name="Cao Y."/>
            <person name="Shi Q."/>
        </authorList>
    </citation>
    <scope>NUCLEOTIDE SEQUENCE [MRNA] OF 33-71</scope>
    <source>
        <tissue>Venom duct</tissue>
    </source>
</reference>
<comment type="subcellular location">
    <subcellularLocation>
        <location evidence="1">Secreted</location>
    </subcellularLocation>
</comment>
<comment type="tissue specificity">
    <text>Expressed by the venom duct.</text>
</comment>
<comment type="domain">
    <text>The cysteine framework is V (CC-CC).</text>
</comment>
<comment type="PTM">
    <text evidence="5">Contains 2 disulfide bonds that can be either 'C1-C3, C2-C4' or 'C1-C4, C2-C3', since these disulfide connectivities have been observed for conotoxins with cysteine framework V (for examples, see AC P0DQQ7 and AC P81755).</text>
</comment>
<comment type="similarity">
    <text evidence="5">Belongs to the conotoxin T superfamily.</text>
</comment>
<evidence type="ECO:0000250" key="1"/>
<evidence type="ECO:0000255" key="2"/>
<evidence type="ECO:0000303" key="3">
    <source>
    </source>
</evidence>
<evidence type="ECO:0000303" key="4">
    <source>
    </source>
</evidence>
<evidence type="ECO:0000305" key="5"/>
<protein>
    <recommendedName>
        <fullName evidence="3">Conotoxin Ca5.1</fullName>
    </recommendedName>
    <alternativeName>
        <fullName evidence="4">Ca-92</fullName>
    </alternativeName>
</protein>
<name>CT51_CONCB</name>
<accession>P0C666</accession>
<accession>B4XT44</accession>
<organism>
    <name type="scientific">Conus caracteristicus</name>
    <name type="common">Characteristic cone</name>
    <dbReference type="NCBI Taxonomy" id="89440"/>
    <lineage>
        <taxon>Eukaryota</taxon>
        <taxon>Metazoa</taxon>
        <taxon>Spiralia</taxon>
        <taxon>Lophotrochozoa</taxon>
        <taxon>Mollusca</taxon>
        <taxon>Gastropoda</taxon>
        <taxon>Caenogastropoda</taxon>
        <taxon>Neogastropoda</taxon>
        <taxon>Conoidea</taxon>
        <taxon>Conidae</taxon>
        <taxon>Conus</taxon>
    </lineage>
</organism>
<sequence>MRCVPVFIILLLLASPAASDPLEKRIQSDLIRAALEDADTKNDPRILEDIVSTALATCCKFQFLNFCCNEK</sequence>
<keyword id="KW-0027">Amidation</keyword>
<keyword id="KW-1015">Disulfide bond</keyword>
<keyword id="KW-0964">Secreted</keyword>
<keyword id="KW-0732">Signal</keyword>
<keyword id="KW-0800">Toxin</keyword>
<proteinExistence type="evidence at transcript level"/>
<feature type="signal peptide" evidence="2">
    <location>
        <begin position="1"/>
        <end position="19"/>
    </location>
</feature>
<feature type="propeptide" id="PRO_0000316905" evidence="1">
    <location>
        <begin position="20"/>
        <end position="56"/>
    </location>
</feature>
<feature type="peptide" id="PRO_0000316906" description="Conotoxin Ca5.1">
    <location>
        <begin position="57"/>
        <end position="70"/>
    </location>
</feature>